<comment type="function">
    <text evidence="2 3">Forms paracellular channels: polymerizes in tight junction strands with cation- and water-selective channels through the strands, conveying epithelial permeability in a process known as paracellular tight junction permeability (By similarity). In intestinal epithelium, allows for sodium and water fluxes from the peritoneal side to the lumen of the intestine to regulate nutrient absorption and intestinal morphogenesis (By similarity).</text>
</comment>
<comment type="catalytic activity">
    <reaction evidence="2 3">
        <text>Na(+)(in) = Na(+)(out)</text>
        <dbReference type="Rhea" id="RHEA:34963"/>
        <dbReference type="ChEBI" id="CHEBI:29101"/>
    </reaction>
</comment>
<comment type="catalytic activity">
    <reaction evidence="2 3">
        <text>K(+)(in) = K(+)(out)</text>
        <dbReference type="Rhea" id="RHEA:29463"/>
        <dbReference type="ChEBI" id="CHEBI:29103"/>
    </reaction>
</comment>
<comment type="catalytic activity">
    <reaction evidence="2 3">
        <text>Cs(+)(in) = Cs(+)(out)</text>
        <dbReference type="Rhea" id="RHEA:78555"/>
        <dbReference type="ChEBI" id="CHEBI:49547"/>
    </reaction>
</comment>
<comment type="catalytic activity">
    <reaction evidence="2 3">
        <text>Rb(+)(in) = Rb(+)(out)</text>
        <dbReference type="Rhea" id="RHEA:78547"/>
        <dbReference type="ChEBI" id="CHEBI:49847"/>
    </reaction>
</comment>
<comment type="catalytic activity">
    <reaction evidence="2 3">
        <text>Li(+)(in) = Li(+)(out)</text>
        <dbReference type="Rhea" id="RHEA:78551"/>
        <dbReference type="ChEBI" id="CHEBI:49713"/>
    </reaction>
</comment>
<comment type="catalytic activity">
    <reaction evidence="2">
        <text>NH4(+)(in) = NH4(+)(out)</text>
        <dbReference type="Rhea" id="RHEA:28747"/>
        <dbReference type="ChEBI" id="CHEBI:28938"/>
    </reaction>
</comment>
<comment type="catalytic activity">
    <reaction evidence="2">
        <text>methylamine(out) = methylamine(in)</text>
        <dbReference type="Rhea" id="RHEA:74391"/>
        <dbReference type="ChEBI" id="CHEBI:59338"/>
    </reaction>
</comment>
<comment type="catalytic activity">
    <reaction evidence="2">
        <text>H2O(in) = H2O(out)</text>
        <dbReference type="Rhea" id="RHEA:29667"/>
        <dbReference type="ChEBI" id="CHEBI:15377"/>
    </reaction>
</comment>
<comment type="subunit">
    <text evidence="2">Can form homo- and heteropolymeric tight junction strands.</text>
</comment>
<comment type="subcellular location">
    <subcellularLocation>
        <location evidence="2">Cell junction</location>
        <location evidence="2">Tight junction</location>
    </subcellularLocation>
    <subcellularLocation>
        <location evidence="2">Cell membrane</location>
        <topology evidence="4">Multi-pass membrane protein</topology>
    </subcellularLocation>
</comment>
<comment type="tissue specificity">
    <text evidence="5">Detected in kidney, jejunum and colon (at protein level).</text>
</comment>
<comment type="PTM">
    <text evidence="3">Palmitoylated.</text>
</comment>
<comment type="similarity">
    <text evidence="6">Belongs to the claudin family.</text>
</comment>
<sequence>MSIAVETFGFFMSALGLLMLGVTLPNSYWRVSTVHGNVITTNTIFENLWYSCATDSLGVSNCWDFPSMLALSGYVQGCRALMITAILLGFLGLFLGMVGLRCTNVGNIDLSRKAKLLAIAGAFHILAGACGMVAISWYAVNITTDFFNPLYVGTKYELGSALYLGWSASLLSILGGICVFSTCCCDSKEDPATRVGLPYKPSTVVTARATSDESDVSFGKYGKNAYV</sequence>
<accession>D3ZQJ0</accession>
<protein>
    <recommendedName>
        <fullName>Claudin-15</fullName>
    </recommendedName>
</protein>
<keyword id="KW-0965">Cell junction</keyword>
<keyword id="KW-1003">Cell membrane</keyword>
<keyword id="KW-1015">Disulfide bond</keyword>
<keyword id="KW-0406">Ion transport</keyword>
<keyword id="KW-0449">Lipoprotein</keyword>
<keyword id="KW-0472">Membrane</keyword>
<keyword id="KW-0564">Palmitate</keyword>
<keyword id="KW-0597">Phosphoprotein</keyword>
<keyword id="KW-1185">Reference proteome</keyword>
<keyword id="KW-0796">Tight junction</keyword>
<keyword id="KW-0812">Transmembrane</keyword>
<keyword id="KW-1133">Transmembrane helix</keyword>
<keyword id="KW-0813">Transport</keyword>
<name>CLD15_RAT</name>
<gene>
    <name evidence="7" type="primary">Cldn15</name>
</gene>
<organism>
    <name type="scientific">Rattus norvegicus</name>
    <name type="common">Rat</name>
    <dbReference type="NCBI Taxonomy" id="10116"/>
    <lineage>
        <taxon>Eukaryota</taxon>
        <taxon>Metazoa</taxon>
        <taxon>Chordata</taxon>
        <taxon>Craniata</taxon>
        <taxon>Vertebrata</taxon>
        <taxon>Euteleostomi</taxon>
        <taxon>Mammalia</taxon>
        <taxon>Eutheria</taxon>
        <taxon>Euarchontoglires</taxon>
        <taxon>Glires</taxon>
        <taxon>Rodentia</taxon>
        <taxon>Myomorpha</taxon>
        <taxon>Muroidea</taxon>
        <taxon>Muridae</taxon>
        <taxon>Murinae</taxon>
        <taxon>Rattus</taxon>
    </lineage>
</organism>
<feature type="chain" id="PRO_0000429588" description="Claudin-15">
    <location>
        <begin position="1"/>
        <end position="227"/>
    </location>
</feature>
<feature type="topological domain" description="Cytoplasmic" evidence="1">
    <location>
        <position position="1"/>
    </location>
</feature>
<feature type="transmembrane region" description="Helical" evidence="1">
    <location>
        <begin position="2"/>
        <end position="24"/>
    </location>
</feature>
<feature type="topological domain" description="Extracellular" evidence="1">
    <location>
        <begin position="25"/>
        <end position="74"/>
    </location>
</feature>
<feature type="transmembrane region" description="Helical" evidence="1">
    <location>
        <begin position="75"/>
        <end position="99"/>
    </location>
</feature>
<feature type="topological domain" description="Cytoplasmic" evidence="1">
    <location>
        <begin position="100"/>
        <end position="115"/>
    </location>
</feature>
<feature type="transmembrane region" description="Helical" evidence="1">
    <location>
        <begin position="116"/>
        <end position="140"/>
    </location>
</feature>
<feature type="topological domain" description="Extracellular" evidence="1">
    <location>
        <begin position="141"/>
        <end position="159"/>
    </location>
</feature>
<feature type="transmembrane region" description="Helical" evidence="1">
    <location>
        <begin position="160"/>
        <end position="182"/>
    </location>
</feature>
<feature type="topological domain" description="Cytoplasmic" evidence="1">
    <location>
        <begin position="183"/>
        <end position="227"/>
    </location>
</feature>
<feature type="region of interest" description="Important for the formation of tight-junction strand-like structures" evidence="1">
    <location>
        <begin position="146"/>
        <end position="147"/>
    </location>
</feature>
<feature type="site" description="Important for Na(+)-selective paracellular ion transport" evidence="1">
    <location>
        <position position="55"/>
    </location>
</feature>
<feature type="site" description="Important for Na(+)-selective paracellular ion transport" evidence="1">
    <location>
        <position position="64"/>
    </location>
</feature>
<feature type="site" description="Important for the formation of tight-junction strand-like structures" evidence="1">
    <location>
        <position position="68"/>
    </location>
</feature>
<feature type="modified residue" description="Phosphoserine" evidence="2">
    <location>
        <position position="111"/>
    </location>
</feature>
<feature type="modified residue" description="Phosphoserine" evidence="8">
    <location>
        <position position="211"/>
    </location>
</feature>
<feature type="modified residue" description="Phosphoserine" evidence="8">
    <location>
        <position position="214"/>
    </location>
</feature>
<feature type="modified residue" description="Phosphoserine" evidence="8">
    <location>
        <position position="217"/>
    </location>
</feature>
<feature type="disulfide bond" evidence="1">
    <location>
        <begin position="52"/>
        <end position="62"/>
    </location>
</feature>
<reference key="1">
    <citation type="journal article" date="2004" name="Nature">
        <title>Genome sequence of the Brown Norway rat yields insights into mammalian evolution.</title>
        <authorList>
            <person name="Gibbs R.A."/>
            <person name="Weinstock G.M."/>
            <person name="Metzker M.L."/>
            <person name="Muzny D.M."/>
            <person name="Sodergren E.J."/>
            <person name="Scherer S."/>
            <person name="Scott G."/>
            <person name="Steffen D."/>
            <person name="Worley K.C."/>
            <person name="Burch P.E."/>
            <person name="Okwuonu G."/>
            <person name="Hines S."/>
            <person name="Lewis L."/>
            <person name="Deramo C."/>
            <person name="Delgado O."/>
            <person name="Dugan-Rocha S."/>
            <person name="Miner G."/>
            <person name="Morgan M."/>
            <person name="Hawes A."/>
            <person name="Gill R."/>
            <person name="Holt R.A."/>
            <person name="Adams M.D."/>
            <person name="Amanatides P.G."/>
            <person name="Baden-Tillson H."/>
            <person name="Barnstead M."/>
            <person name="Chin S."/>
            <person name="Evans C.A."/>
            <person name="Ferriera S."/>
            <person name="Fosler C."/>
            <person name="Glodek A."/>
            <person name="Gu Z."/>
            <person name="Jennings D."/>
            <person name="Kraft C.L."/>
            <person name="Nguyen T."/>
            <person name="Pfannkoch C.M."/>
            <person name="Sitter C."/>
            <person name="Sutton G.G."/>
            <person name="Venter J.C."/>
            <person name="Woodage T."/>
            <person name="Smith D."/>
            <person name="Lee H.-M."/>
            <person name="Gustafson E."/>
            <person name="Cahill P."/>
            <person name="Kana A."/>
            <person name="Doucette-Stamm L."/>
            <person name="Weinstock K."/>
            <person name="Fechtel K."/>
            <person name="Weiss R.B."/>
            <person name="Dunn D.M."/>
            <person name="Green E.D."/>
            <person name="Blakesley R.W."/>
            <person name="Bouffard G.G."/>
            <person name="De Jong P.J."/>
            <person name="Osoegawa K."/>
            <person name="Zhu B."/>
            <person name="Marra M."/>
            <person name="Schein J."/>
            <person name="Bosdet I."/>
            <person name="Fjell C."/>
            <person name="Jones S."/>
            <person name="Krzywinski M."/>
            <person name="Mathewson C."/>
            <person name="Siddiqui A."/>
            <person name="Wye N."/>
            <person name="McPherson J."/>
            <person name="Zhao S."/>
            <person name="Fraser C.M."/>
            <person name="Shetty J."/>
            <person name="Shatsman S."/>
            <person name="Geer K."/>
            <person name="Chen Y."/>
            <person name="Abramzon S."/>
            <person name="Nierman W.C."/>
            <person name="Havlak P.H."/>
            <person name="Chen R."/>
            <person name="Durbin K.J."/>
            <person name="Egan A."/>
            <person name="Ren Y."/>
            <person name="Song X.-Z."/>
            <person name="Li B."/>
            <person name="Liu Y."/>
            <person name="Qin X."/>
            <person name="Cawley S."/>
            <person name="Cooney A.J."/>
            <person name="D'Souza L.M."/>
            <person name="Martin K."/>
            <person name="Wu J.Q."/>
            <person name="Gonzalez-Garay M.L."/>
            <person name="Jackson A.R."/>
            <person name="Kalafus K.J."/>
            <person name="McLeod M.P."/>
            <person name="Milosavljevic A."/>
            <person name="Virk D."/>
            <person name="Volkov A."/>
            <person name="Wheeler D.A."/>
            <person name="Zhang Z."/>
            <person name="Bailey J.A."/>
            <person name="Eichler E.E."/>
            <person name="Tuzun E."/>
            <person name="Birney E."/>
            <person name="Mongin E."/>
            <person name="Ureta-Vidal A."/>
            <person name="Woodwark C."/>
            <person name="Zdobnov E."/>
            <person name="Bork P."/>
            <person name="Suyama M."/>
            <person name="Torrents D."/>
            <person name="Alexandersson M."/>
            <person name="Trask B.J."/>
            <person name="Young J.M."/>
            <person name="Huang H."/>
            <person name="Wang H."/>
            <person name="Xing H."/>
            <person name="Daniels S."/>
            <person name="Gietzen D."/>
            <person name="Schmidt J."/>
            <person name="Stevens K."/>
            <person name="Vitt U."/>
            <person name="Wingrove J."/>
            <person name="Camara F."/>
            <person name="Mar Alba M."/>
            <person name="Abril J.F."/>
            <person name="Guigo R."/>
            <person name="Smit A."/>
            <person name="Dubchak I."/>
            <person name="Rubin E.M."/>
            <person name="Couronne O."/>
            <person name="Poliakov A."/>
            <person name="Huebner N."/>
            <person name="Ganten D."/>
            <person name="Goesele C."/>
            <person name="Hummel O."/>
            <person name="Kreitler T."/>
            <person name="Lee Y.-A."/>
            <person name="Monti J."/>
            <person name="Schulz H."/>
            <person name="Zimdahl H."/>
            <person name="Himmelbauer H."/>
            <person name="Lehrach H."/>
            <person name="Jacob H.J."/>
            <person name="Bromberg S."/>
            <person name="Gullings-Handley J."/>
            <person name="Jensen-Seaman M.I."/>
            <person name="Kwitek A.E."/>
            <person name="Lazar J."/>
            <person name="Pasko D."/>
            <person name="Tonellato P.J."/>
            <person name="Twigger S."/>
            <person name="Ponting C.P."/>
            <person name="Duarte J.M."/>
            <person name="Rice S."/>
            <person name="Goodstadt L."/>
            <person name="Beatson S.A."/>
            <person name="Emes R.D."/>
            <person name="Winter E.E."/>
            <person name="Webber C."/>
            <person name="Brandt P."/>
            <person name="Nyakatura G."/>
            <person name="Adetobi M."/>
            <person name="Chiaromonte F."/>
            <person name="Elnitski L."/>
            <person name="Eswara P."/>
            <person name="Hardison R.C."/>
            <person name="Hou M."/>
            <person name="Kolbe D."/>
            <person name="Makova K."/>
            <person name="Miller W."/>
            <person name="Nekrutenko A."/>
            <person name="Riemer C."/>
            <person name="Schwartz S."/>
            <person name="Taylor J."/>
            <person name="Yang S."/>
            <person name="Zhang Y."/>
            <person name="Lindpaintner K."/>
            <person name="Andrews T.D."/>
            <person name="Caccamo M."/>
            <person name="Clamp M."/>
            <person name="Clarke L."/>
            <person name="Curwen V."/>
            <person name="Durbin R.M."/>
            <person name="Eyras E."/>
            <person name="Searle S.M."/>
            <person name="Cooper G.M."/>
            <person name="Batzoglou S."/>
            <person name="Brudno M."/>
            <person name="Sidow A."/>
            <person name="Stone E.A."/>
            <person name="Payseur B.A."/>
            <person name="Bourque G."/>
            <person name="Lopez-Otin C."/>
            <person name="Puente X.S."/>
            <person name="Chakrabarti K."/>
            <person name="Chatterji S."/>
            <person name="Dewey C."/>
            <person name="Pachter L."/>
            <person name="Bray N."/>
            <person name="Yap V.B."/>
            <person name="Caspi A."/>
            <person name="Tesler G."/>
            <person name="Pevzner P.A."/>
            <person name="Haussler D."/>
            <person name="Roskin K.M."/>
            <person name="Baertsch R."/>
            <person name="Clawson H."/>
            <person name="Furey T.S."/>
            <person name="Hinrichs A.S."/>
            <person name="Karolchik D."/>
            <person name="Kent W.J."/>
            <person name="Rosenbloom K.R."/>
            <person name="Trumbower H."/>
            <person name="Weirauch M."/>
            <person name="Cooper D.N."/>
            <person name="Stenson P.D."/>
            <person name="Ma B."/>
            <person name="Brent M."/>
            <person name="Arumugam M."/>
            <person name="Shteynberg D."/>
            <person name="Copley R.R."/>
            <person name="Taylor M.S."/>
            <person name="Riethman H."/>
            <person name="Mudunuri U."/>
            <person name="Peterson J."/>
            <person name="Guyer M."/>
            <person name="Felsenfeld A."/>
            <person name="Old S."/>
            <person name="Mockrin S."/>
            <person name="Collins F.S."/>
        </authorList>
    </citation>
    <scope>NUCLEOTIDE SEQUENCE [LARGE SCALE GENOMIC DNA]</scope>
    <source>
        <strain>Brown Norway</strain>
    </source>
</reference>
<reference key="2">
    <citation type="submission" date="2005-07" db="EMBL/GenBank/DDBJ databases">
        <authorList>
            <person name="Mural R.J."/>
            <person name="Adams M.D."/>
            <person name="Myers E.W."/>
            <person name="Smith H.O."/>
            <person name="Venter J.C."/>
        </authorList>
    </citation>
    <scope>NUCLEOTIDE SEQUENCE [LARGE SCALE GENOMIC DNA]</scope>
    <source>
        <strain>Brown Norway</strain>
    </source>
</reference>
<reference key="3">
    <citation type="journal article" date="2005" name="Arch. Histol. Cytol.">
        <title>Heterogeneity in expression and subcellular localization of tight junction proteins, claudin-10 and -15, examined by RT-PCR and immunofluorescence microscopy.</title>
        <authorList>
            <person name="Inai T."/>
            <person name="Sengoku A."/>
            <person name="Guan X."/>
            <person name="Hirose E."/>
            <person name="Iida H."/>
            <person name="Shibata Y."/>
        </authorList>
    </citation>
    <scope>SUBCELLULAR LOCATION</scope>
    <scope>TISSUE SPECIFICITY</scope>
</reference>
<reference key="4">
    <citation type="journal article" date="2012" name="Nat. Commun.">
        <title>Quantitative maps of protein phosphorylation sites across 14 different rat organs and tissues.</title>
        <authorList>
            <person name="Lundby A."/>
            <person name="Secher A."/>
            <person name="Lage K."/>
            <person name="Nordsborg N.B."/>
            <person name="Dmytriyev A."/>
            <person name="Lundby C."/>
            <person name="Olsen J.V."/>
        </authorList>
    </citation>
    <scope>PHOSPHORYLATION [LARGE SCALE ANALYSIS] AT SER-211; SER-214 AND SER-217</scope>
    <scope>IDENTIFICATION BY MASS SPECTROMETRY [LARGE SCALE ANALYSIS]</scope>
</reference>
<proteinExistence type="evidence at protein level"/>
<dbReference type="EMBL" id="AABR06071124">
    <property type="status" value="NOT_ANNOTATED_CDS"/>
    <property type="molecule type" value="Genomic_DNA"/>
</dbReference>
<dbReference type="EMBL" id="AABR06071125">
    <property type="status" value="NOT_ANNOTATED_CDS"/>
    <property type="molecule type" value="Genomic_DNA"/>
</dbReference>
<dbReference type="EMBL" id="AABR06071126">
    <property type="status" value="NOT_ANNOTATED_CDS"/>
    <property type="molecule type" value="Genomic_DNA"/>
</dbReference>
<dbReference type="EMBL" id="CH473973">
    <property type="protein sequence ID" value="EDM13299.1"/>
    <property type="molecule type" value="Genomic_DNA"/>
</dbReference>
<dbReference type="RefSeq" id="NP_001100605.1">
    <property type="nucleotide sequence ID" value="NM_001107135.4"/>
</dbReference>
<dbReference type="RefSeq" id="XP_006249217.1">
    <property type="nucleotide sequence ID" value="XM_006249155.5"/>
</dbReference>
<dbReference type="SMR" id="D3ZQJ0"/>
<dbReference type="FunCoup" id="D3ZQJ0">
    <property type="interactions" value="336"/>
</dbReference>
<dbReference type="STRING" id="10116.ENSRNOP00000001923"/>
<dbReference type="iPTMnet" id="D3ZQJ0"/>
<dbReference type="PhosphoSitePlus" id="D3ZQJ0"/>
<dbReference type="PaxDb" id="10116-ENSRNOP00000001923"/>
<dbReference type="Ensembl" id="ENSRNOT00000001923.8">
    <property type="protein sequence ID" value="ENSRNOP00000001923.5"/>
    <property type="gene ID" value="ENSRNOG00000001419.8"/>
</dbReference>
<dbReference type="GeneID" id="304388"/>
<dbReference type="KEGG" id="rno:304388"/>
<dbReference type="UCSC" id="RGD:1310678">
    <property type="organism name" value="rat"/>
</dbReference>
<dbReference type="AGR" id="RGD:1310678"/>
<dbReference type="CTD" id="24146"/>
<dbReference type="RGD" id="1310678">
    <property type="gene designation" value="Cldn15"/>
</dbReference>
<dbReference type="eggNOG" id="ENOG502RYAR">
    <property type="taxonomic scope" value="Eukaryota"/>
</dbReference>
<dbReference type="GeneTree" id="ENSGT00940000157650"/>
<dbReference type="HOGENOM" id="CLU_076370_0_0_1"/>
<dbReference type="InParanoid" id="D3ZQJ0"/>
<dbReference type="OMA" id="SNCWEFP"/>
<dbReference type="OrthoDB" id="32398at9989"/>
<dbReference type="PhylomeDB" id="D3ZQJ0"/>
<dbReference type="TreeFam" id="TF331936"/>
<dbReference type="PRO" id="PR:D3ZQJ0"/>
<dbReference type="Proteomes" id="UP000002494">
    <property type="component" value="Chromosome 12"/>
</dbReference>
<dbReference type="Proteomes" id="UP000234681">
    <property type="component" value="Chromosome 12"/>
</dbReference>
<dbReference type="Bgee" id="ENSRNOG00000001419">
    <property type="expression patterns" value="Expressed in duodenum and 18 other cell types or tissues"/>
</dbReference>
<dbReference type="GO" id="GO:0005923">
    <property type="term" value="C:bicellular tight junction"/>
    <property type="evidence" value="ECO:0000318"/>
    <property type="project" value="GO_Central"/>
</dbReference>
<dbReference type="GO" id="GO:0016328">
    <property type="term" value="C:lateral plasma membrane"/>
    <property type="evidence" value="ECO:0000266"/>
    <property type="project" value="RGD"/>
</dbReference>
<dbReference type="GO" id="GO:0005886">
    <property type="term" value="C:plasma membrane"/>
    <property type="evidence" value="ECO:0000318"/>
    <property type="project" value="GO_Central"/>
</dbReference>
<dbReference type="GO" id="GO:0070160">
    <property type="term" value="C:tight junction"/>
    <property type="evidence" value="ECO:0000250"/>
    <property type="project" value="UniProtKB"/>
</dbReference>
<dbReference type="GO" id="GO:0160187">
    <property type="term" value="F:paracellular tight junction channel activity"/>
    <property type="evidence" value="ECO:0000250"/>
    <property type="project" value="UniProtKB"/>
</dbReference>
<dbReference type="GO" id="GO:0005198">
    <property type="term" value="F:structural molecule activity"/>
    <property type="evidence" value="ECO:0007669"/>
    <property type="project" value="InterPro"/>
</dbReference>
<dbReference type="GO" id="GO:0070830">
    <property type="term" value="P:bicellular tight junction assembly"/>
    <property type="evidence" value="ECO:0000318"/>
    <property type="project" value="GO_Central"/>
</dbReference>
<dbReference type="GO" id="GO:0007155">
    <property type="term" value="P:cell adhesion"/>
    <property type="evidence" value="ECO:0000318"/>
    <property type="project" value="GO_Central"/>
</dbReference>
<dbReference type="GO" id="GO:0006811">
    <property type="term" value="P:monoatomic ion transport"/>
    <property type="evidence" value="ECO:0007669"/>
    <property type="project" value="UniProtKB-KW"/>
</dbReference>
<dbReference type="GO" id="GO:0160184">
    <property type="term" value="P:paracellular transport"/>
    <property type="evidence" value="ECO:0000250"/>
    <property type="project" value="UniProtKB"/>
</dbReference>
<dbReference type="GO" id="GO:1903985">
    <property type="term" value="P:regulation of intestinal D-glucose absorption"/>
    <property type="evidence" value="ECO:0000250"/>
    <property type="project" value="UniProtKB"/>
</dbReference>
<dbReference type="GO" id="GO:1904729">
    <property type="term" value="P:regulation of intestinal lipid absorption"/>
    <property type="evidence" value="ECO:0000250"/>
    <property type="project" value="UniProtKB"/>
</dbReference>
<dbReference type="FunFam" id="1.20.140.150:FF:000001">
    <property type="entry name" value="Claudin"/>
    <property type="match status" value="1"/>
</dbReference>
<dbReference type="Gene3D" id="1.20.140.150">
    <property type="match status" value="1"/>
</dbReference>
<dbReference type="InterPro" id="IPR006187">
    <property type="entry name" value="Claudin"/>
</dbReference>
<dbReference type="InterPro" id="IPR008094">
    <property type="entry name" value="Claudin15"/>
</dbReference>
<dbReference type="InterPro" id="IPR017974">
    <property type="entry name" value="Claudin_CS"/>
</dbReference>
<dbReference type="InterPro" id="IPR004031">
    <property type="entry name" value="PMP22/EMP/MP20/Claudin"/>
</dbReference>
<dbReference type="PANTHER" id="PTHR12002">
    <property type="entry name" value="CLAUDIN"/>
    <property type="match status" value="1"/>
</dbReference>
<dbReference type="Pfam" id="PF00822">
    <property type="entry name" value="PMP22_Claudin"/>
    <property type="match status" value="1"/>
</dbReference>
<dbReference type="PRINTS" id="PR01077">
    <property type="entry name" value="CLAUDIN"/>
</dbReference>
<dbReference type="PRINTS" id="PR01718">
    <property type="entry name" value="CLAUDIN15"/>
</dbReference>
<dbReference type="PROSITE" id="PS01346">
    <property type="entry name" value="CLAUDIN"/>
    <property type="match status" value="1"/>
</dbReference>
<evidence type="ECO:0000250" key="1"/>
<evidence type="ECO:0000250" key="2">
    <source>
        <dbReference type="UniProtKB" id="P56746"/>
    </source>
</evidence>
<evidence type="ECO:0000250" key="3">
    <source>
        <dbReference type="UniProtKB" id="Q9Z0S5"/>
    </source>
</evidence>
<evidence type="ECO:0000255" key="4"/>
<evidence type="ECO:0000269" key="5">
    <source>
    </source>
</evidence>
<evidence type="ECO:0000305" key="6"/>
<evidence type="ECO:0000312" key="7">
    <source>
        <dbReference type="RGD" id="1310678"/>
    </source>
</evidence>
<evidence type="ECO:0007744" key="8">
    <source>
    </source>
</evidence>